<protein>
    <recommendedName>
        <fullName evidence="1">Small ribosomal subunit protein uS8</fullName>
    </recommendedName>
    <alternativeName>
        <fullName evidence="2">30S ribosomal protein S8</fullName>
    </alternativeName>
</protein>
<gene>
    <name evidence="1" type="primary">rpsH</name>
    <name type="ordered locus">BARBAKC583_0712</name>
</gene>
<comment type="function">
    <text evidence="1">One of the primary rRNA binding proteins, it binds directly to 16S rRNA central domain where it helps coordinate assembly of the platform of the 30S subunit.</text>
</comment>
<comment type="subunit">
    <text evidence="1">Part of the 30S ribosomal subunit. Contacts proteins S5 and S12.</text>
</comment>
<comment type="similarity">
    <text evidence="1">Belongs to the universal ribosomal protein uS8 family.</text>
</comment>
<keyword id="KW-0687">Ribonucleoprotein</keyword>
<keyword id="KW-0689">Ribosomal protein</keyword>
<keyword id="KW-0694">RNA-binding</keyword>
<keyword id="KW-0699">rRNA-binding</keyword>
<proteinExistence type="inferred from homology"/>
<sequence>MSMSDPLGDMLTRIRNAISRKKSKVVTPASKLRARVLDVLKLEGYICGYNQIDSGNGKFEFEIELKYFENSSVIRTISRISKPGRRVYVSTKSILQVANGLGISILSTPKGVMTDHEAREQNVGGELLCRVF</sequence>
<feature type="chain" id="PRO_0000290804" description="Small ribosomal subunit protein uS8">
    <location>
        <begin position="1"/>
        <end position="132"/>
    </location>
</feature>
<evidence type="ECO:0000255" key="1">
    <source>
        <dbReference type="HAMAP-Rule" id="MF_01302"/>
    </source>
</evidence>
<evidence type="ECO:0000305" key="2"/>
<organism>
    <name type="scientific">Bartonella bacilliformis (strain ATCC 35685 / KC583 / Herrer 020/F12,63)</name>
    <dbReference type="NCBI Taxonomy" id="360095"/>
    <lineage>
        <taxon>Bacteria</taxon>
        <taxon>Pseudomonadati</taxon>
        <taxon>Pseudomonadota</taxon>
        <taxon>Alphaproteobacteria</taxon>
        <taxon>Hyphomicrobiales</taxon>
        <taxon>Bartonellaceae</taxon>
        <taxon>Bartonella</taxon>
    </lineage>
</organism>
<name>RS8_BARBK</name>
<dbReference type="EMBL" id="CP000524">
    <property type="protein sequence ID" value="ABM44912.1"/>
    <property type="molecule type" value="Genomic_DNA"/>
</dbReference>
<dbReference type="RefSeq" id="WP_005766940.1">
    <property type="nucleotide sequence ID" value="NC_008783.1"/>
</dbReference>
<dbReference type="SMR" id="A1USQ8"/>
<dbReference type="STRING" id="360095.BARBAKC583_0712"/>
<dbReference type="GeneID" id="4684532"/>
<dbReference type="KEGG" id="bbk:BARBAKC583_0712"/>
<dbReference type="PATRIC" id="fig|360095.6.peg.691"/>
<dbReference type="eggNOG" id="COG0096">
    <property type="taxonomic scope" value="Bacteria"/>
</dbReference>
<dbReference type="HOGENOM" id="CLU_098428_0_0_5"/>
<dbReference type="OrthoDB" id="9802617at2"/>
<dbReference type="Proteomes" id="UP000000643">
    <property type="component" value="Chromosome"/>
</dbReference>
<dbReference type="GO" id="GO:1990904">
    <property type="term" value="C:ribonucleoprotein complex"/>
    <property type="evidence" value="ECO:0007669"/>
    <property type="project" value="UniProtKB-KW"/>
</dbReference>
<dbReference type="GO" id="GO:0005840">
    <property type="term" value="C:ribosome"/>
    <property type="evidence" value="ECO:0007669"/>
    <property type="project" value="UniProtKB-KW"/>
</dbReference>
<dbReference type="GO" id="GO:0019843">
    <property type="term" value="F:rRNA binding"/>
    <property type="evidence" value="ECO:0007669"/>
    <property type="project" value="UniProtKB-UniRule"/>
</dbReference>
<dbReference type="GO" id="GO:0003735">
    <property type="term" value="F:structural constituent of ribosome"/>
    <property type="evidence" value="ECO:0007669"/>
    <property type="project" value="InterPro"/>
</dbReference>
<dbReference type="GO" id="GO:0006412">
    <property type="term" value="P:translation"/>
    <property type="evidence" value="ECO:0007669"/>
    <property type="project" value="UniProtKB-UniRule"/>
</dbReference>
<dbReference type="FunFam" id="3.30.1370.30:FF:000002">
    <property type="entry name" value="30S ribosomal protein S8"/>
    <property type="match status" value="1"/>
</dbReference>
<dbReference type="FunFam" id="3.30.1490.10:FF:000001">
    <property type="entry name" value="30S ribosomal protein S8"/>
    <property type="match status" value="1"/>
</dbReference>
<dbReference type="Gene3D" id="3.30.1370.30">
    <property type="match status" value="1"/>
</dbReference>
<dbReference type="Gene3D" id="3.30.1490.10">
    <property type="match status" value="1"/>
</dbReference>
<dbReference type="HAMAP" id="MF_01302_B">
    <property type="entry name" value="Ribosomal_uS8_B"/>
    <property type="match status" value="1"/>
</dbReference>
<dbReference type="InterPro" id="IPR000630">
    <property type="entry name" value="Ribosomal_uS8"/>
</dbReference>
<dbReference type="InterPro" id="IPR047863">
    <property type="entry name" value="Ribosomal_uS8_CS"/>
</dbReference>
<dbReference type="InterPro" id="IPR035987">
    <property type="entry name" value="Ribosomal_uS8_sf"/>
</dbReference>
<dbReference type="NCBIfam" id="NF001109">
    <property type="entry name" value="PRK00136.1"/>
    <property type="match status" value="1"/>
</dbReference>
<dbReference type="PANTHER" id="PTHR11758">
    <property type="entry name" value="40S RIBOSOMAL PROTEIN S15A"/>
    <property type="match status" value="1"/>
</dbReference>
<dbReference type="Pfam" id="PF00410">
    <property type="entry name" value="Ribosomal_S8"/>
    <property type="match status" value="1"/>
</dbReference>
<dbReference type="SUPFAM" id="SSF56047">
    <property type="entry name" value="Ribosomal protein S8"/>
    <property type="match status" value="1"/>
</dbReference>
<dbReference type="PROSITE" id="PS00053">
    <property type="entry name" value="RIBOSOMAL_S8"/>
    <property type="match status" value="1"/>
</dbReference>
<accession>A1USQ8</accession>
<reference key="1">
    <citation type="submission" date="2006-12" db="EMBL/GenBank/DDBJ databases">
        <authorList>
            <person name="Hendrix L."/>
            <person name="Mohamoud Y."/>
            <person name="Radune D."/>
            <person name="Shvartsbeyn A."/>
            <person name="Daugherty S."/>
            <person name="Dodson R."/>
            <person name="Durkin A.S."/>
            <person name="Harkins D."/>
            <person name="Huot H."/>
            <person name="Kothari S.P."/>
            <person name="Madupu R."/>
            <person name="Li J."/>
            <person name="Nelson W.C."/>
            <person name="Shrivastava S."/>
            <person name="Giglio M.G."/>
            <person name="Haft D."/>
            <person name="Selengut J."/>
            <person name="Fraser-Ligget C."/>
            <person name="Seshadri R."/>
        </authorList>
    </citation>
    <scope>NUCLEOTIDE SEQUENCE [LARGE SCALE GENOMIC DNA]</scope>
    <source>
        <strain>ATCC 35685 / KC583 / Herrer 020/F12,63</strain>
    </source>
</reference>